<feature type="chain" id="PRO_0000238092" description="33 kDa chaperonin">
    <location>
        <begin position="1"/>
        <end position="292"/>
    </location>
</feature>
<feature type="disulfide bond" description="Redox-active" evidence="1">
    <location>
        <begin position="230"/>
        <end position="232"/>
    </location>
</feature>
<feature type="disulfide bond" description="Redox-active" evidence="1">
    <location>
        <begin position="263"/>
        <end position="266"/>
    </location>
</feature>
<comment type="function">
    <text evidence="1">Redox regulated molecular chaperone. Protects both thermally unfolding and oxidatively damaged proteins from irreversible aggregation. Plays an important role in the bacterial defense system toward oxidative stress.</text>
</comment>
<comment type="subcellular location">
    <subcellularLocation>
        <location evidence="1">Cytoplasm</location>
    </subcellularLocation>
</comment>
<comment type="PTM">
    <text evidence="1">Under oxidizing conditions two disulfide bonds are formed involving the reactive cysteines. Under reducing conditions zinc is bound to the reactive cysteines and the protein is inactive.</text>
</comment>
<comment type="similarity">
    <text evidence="1">Belongs to the HSP33 family.</text>
</comment>
<organism>
    <name type="scientific">Sodalis glossinidius (strain morsitans)</name>
    <dbReference type="NCBI Taxonomy" id="343509"/>
    <lineage>
        <taxon>Bacteria</taxon>
        <taxon>Pseudomonadati</taxon>
        <taxon>Pseudomonadota</taxon>
        <taxon>Gammaproteobacteria</taxon>
        <taxon>Enterobacterales</taxon>
        <taxon>Bruguierivoracaceae</taxon>
        <taxon>Sodalis</taxon>
    </lineage>
</organism>
<accession>Q2NQI4</accession>
<name>HSLO_SODGM</name>
<evidence type="ECO:0000255" key="1">
    <source>
        <dbReference type="HAMAP-Rule" id="MF_00117"/>
    </source>
</evidence>
<gene>
    <name evidence="1" type="primary">hslO</name>
    <name type="ordered locus">SG2316</name>
</gene>
<reference key="1">
    <citation type="journal article" date="2006" name="Genome Res.">
        <title>Massive genome erosion and functional adaptations provide insights into the symbiotic lifestyle of Sodalis glossinidius in the tsetse host.</title>
        <authorList>
            <person name="Toh H."/>
            <person name="Weiss B.L."/>
            <person name="Perkin S.A.H."/>
            <person name="Yamashita A."/>
            <person name="Oshima K."/>
            <person name="Hattori M."/>
            <person name="Aksoy S."/>
        </authorList>
    </citation>
    <scope>NUCLEOTIDE SEQUENCE [LARGE SCALE GENOMIC DNA]</scope>
    <source>
        <strain>morsitans</strain>
    </source>
</reference>
<keyword id="KW-0143">Chaperone</keyword>
<keyword id="KW-0963">Cytoplasm</keyword>
<keyword id="KW-1015">Disulfide bond</keyword>
<keyword id="KW-0676">Redox-active center</keyword>
<keyword id="KW-0862">Zinc</keyword>
<proteinExistence type="inferred from homology"/>
<dbReference type="EMBL" id="AP008232">
    <property type="protein sequence ID" value="BAE75591.1"/>
    <property type="molecule type" value="Genomic_DNA"/>
</dbReference>
<dbReference type="RefSeq" id="WP_011412124.1">
    <property type="nucleotide sequence ID" value="NC_007712.1"/>
</dbReference>
<dbReference type="SMR" id="Q2NQI4"/>
<dbReference type="STRING" id="343509.SG2316"/>
<dbReference type="KEGG" id="sgl:SG2316"/>
<dbReference type="eggNOG" id="COG1281">
    <property type="taxonomic scope" value="Bacteria"/>
</dbReference>
<dbReference type="HOGENOM" id="CLU_054493_0_0_6"/>
<dbReference type="OrthoDB" id="9793753at2"/>
<dbReference type="BioCyc" id="SGLO343509:SGP1_RS21105-MONOMER"/>
<dbReference type="Proteomes" id="UP000001932">
    <property type="component" value="Chromosome"/>
</dbReference>
<dbReference type="GO" id="GO:0005737">
    <property type="term" value="C:cytoplasm"/>
    <property type="evidence" value="ECO:0007669"/>
    <property type="project" value="UniProtKB-SubCell"/>
</dbReference>
<dbReference type="GO" id="GO:0044183">
    <property type="term" value="F:protein folding chaperone"/>
    <property type="evidence" value="ECO:0007669"/>
    <property type="project" value="TreeGrafter"/>
</dbReference>
<dbReference type="GO" id="GO:0051082">
    <property type="term" value="F:unfolded protein binding"/>
    <property type="evidence" value="ECO:0007669"/>
    <property type="project" value="UniProtKB-UniRule"/>
</dbReference>
<dbReference type="GO" id="GO:0042026">
    <property type="term" value="P:protein refolding"/>
    <property type="evidence" value="ECO:0007669"/>
    <property type="project" value="TreeGrafter"/>
</dbReference>
<dbReference type="CDD" id="cd00498">
    <property type="entry name" value="Hsp33"/>
    <property type="match status" value="1"/>
</dbReference>
<dbReference type="Gene3D" id="1.10.287.480">
    <property type="entry name" value="helix hairpin bin"/>
    <property type="match status" value="1"/>
</dbReference>
<dbReference type="Gene3D" id="3.55.30.10">
    <property type="entry name" value="Hsp33 domain"/>
    <property type="match status" value="1"/>
</dbReference>
<dbReference type="Gene3D" id="3.90.1280.10">
    <property type="entry name" value="HSP33 redox switch-like"/>
    <property type="match status" value="1"/>
</dbReference>
<dbReference type="HAMAP" id="MF_00117">
    <property type="entry name" value="HslO"/>
    <property type="match status" value="1"/>
</dbReference>
<dbReference type="InterPro" id="IPR000397">
    <property type="entry name" value="Heat_shock_Hsp33"/>
</dbReference>
<dbReference type="InterPro" id="IPR016154">
    <property type="entry name" value="Heat_shock_Hsp33_C"/>
</dbReference>
<dbReference type="InterPro" id="IPR016153">
    <property type="entry name" value="Heat_shock_Hsp33_N"/>
</dbReference>
<dbReference type="InterPro" id="IPR023212">
    <property type="entry name" value="Hsp33_helix_hairpin_bin_dom_sf"/>
</dbReference>
<dbReference type="NCBIfam" id="NF001033">
    <property type="entry name" value="PRK00114.1"/>
    <property type="match status" value="1"/>
</dbReference>
<dbReference type="PANTHER" id="PTHR30111">
    <property type="entry name" value="33 KDA CHAPERONIN"/>
    <property type="match status" value="1"/>
</dbReference>
<dbReference type="PANTHER" id="PTHR30111:SF1">
    <property type="entry name" value="33 KDA CHAPERONIN"/>
    <property type="match status" value="1"/>
</dbReference>
<dbReference type="Pfam" id="PF01430">
    <property type="entry name" value="HSP33"/>
    <property type="match status" value="1"/>
</dbReference>
<dbReference type="PIRSF" id="PIRSF005261">
    <property type="entry name" value="Heat_shock_Hsp33"/>
    <property type="match status" value="1"/>
</dbReference>
<dbReference type="SUPFAM" id="SSF64397">
    <property type="entry name" value="Hsp33 domain"/>
    <property type="match status" value="1"/>
</dbReference>
<dbReference type="SUPFAM" id="SSF118352">
    <property type="entry name" value="HSP33 redox switch-like"/>
    <property type="match status" value="1"/>
</dbReference>
<sequence>MTHQDQLHRYLFEDYAVRGELVSLQETYRQVLGQHNYPPAVKTLLGELLVATSLLTATLKFTSEITVQLQGDGPLRLAVINGDDRQNMRGLACINGDIADDATLAQMVGNGYLVITLTPAEGERYQGVVGLEGPRLADCLENYFLQSEQLPTRLFIRTGEYQGEVAAAGLLLQVLPGQDAHADDFDHLAQLTATVKGDELFALPANDVLYRLYHQDNVTVYPAQSVQFLCTCSRQRCADALMTLGEQELHDMLEQDGEVDMHCDFCGSHYRFDADAIADLQQQAAQGYSPQA</sequence>
<protein>
    <recommendedName>
        <fullName evidence="1">33 kDa chaperonin</fullName>
    </recommendedName>
    <alternativeName>
        <fullName evidence="1">Heat shock protein 33 homolog</fullName>
        <shortName evidence="1">HSP33</shortName>
    </alternativeName>
</protein>